<keyword id="KW-0460">Magnesium</keyword>
<keyword id="KW-0479">Metal-binding</keyword>
<keyword id="KW-0808">Transferase</keyword>
<comment type="function">
    <text evidence="1">Catalyzes the sequential condensation of isopentenyl diphosphate (IPP) with geranylgeranyl diphosphate (GGPP) to yield (2Z,6Z,10Z,14Z,18Z,22Z,26Z,30E,34E,38E)-undecaprenyl diphosphate (tritrans,heptacis-UPP). It is probably the precursor of glycosyl carrier lipids.</text>
</comment>
<comment type="catalytic activity">
    <reaction evidence="1">
        <text>geranylgeranyl diphosphate + 7 isopentenyl diphosphate = tri-trans,hepta-cis-undecaprenyl diphosphate + 7 diphosphate</text>
        <dbReference type="Rhea" id="RHEA:27622"/>
        <dbReference type="ChEBI" id="CHEBI:33019"/>
        <dbReference type="ChEBI" id="CHEBI:57533"/>
        <dbReference type="ChEBI" id="CHEBI:60388"/>
        <dbReference type="ChEBI" id="CHEBI:128769"/>
        <dbReference type="EC" id="2.5.1.89"/>
    </reaction>
</comment>
<comment type="cofactor">
    <cofactor evidence="1">
        <name>Mg(2+)</name>
        <dbReference type="ChEBI" id="CHEBI:18420"/>
    </cofactor>
    <text evidence="1">Binds 2 magnesium ions per subunit.</text>
</comment>
<comment type="subunit">
    <text evidence="1">Homodimer.</text>
</comment>
<comment type="similarity">
    <text evidence="1">Belongs to the UPP synthase family.</text>
</comment>
<protein>
    <recommendedName>
        <fullName evidence="1">Tritrans,polycis-undecaprenyl-diphosphate synthase (geranylgeranyl-diphosphate specific)</fullName>
        <ecNumber evidence="1">2.5.1.89</ecNumber>
    </recommendedName>
    <alternativeName>
        <fullName evidence="1">Undecaprenyl diphosphate synthase</fullName>
        <shortName evidence="1">UDS</shortName>
    </alternativeName>
    <alternativeName>
        <fullName evidence="1">Undecaprenyl pyrophosphate synthase</fullName>
        <shortName evidence="1">UPP synthase</shortName>
    </alternativeName>
</protein>
<evidence type="ECO:0000255" key="1">
    <source>
        <dbReference type="HAMAP-Rule" id="MF_01139"/>
    </source>
</evidence>
<feature type="chain" id="PRO_0000123733" description="Tritrans,polycis-undecaprenyl-diphosphate synthase (geranylgeranyl-diphosphate specific)">
    <location>
        <begin position="1"/>
        <end position="298"/>
    </location>
</feature>
<feature type="active site" evidence="1">
    <location>
        <position position="35"/>
    </location>
</feature>
<feature type="active site" description="Proton acceptor" evidence="1">
    <location>
        <position position="83"/>
    </location>
</feature>
<feature type="binding site" evidence="1">
    <location>
        <position position="35"/>
    </location>
    <ligand>
        <name>Mg(2+)</name>
        <dbReference type="ChEBI" id="CHEBI:18420"/>
    </ligand>
</feature>
<feature type="binding site" evidence="1">
    <location>
        <begin position="36"/>
        <end position="39"/>
    </location>
    <ligand>
        <name>substrate</name>
    </ligand>
</feature>
<feature type="binding site" evidence="1">
    <location>
        <position position="48"/>
    </location>
    <ligand>
        <name>substrate</name>
    </ligand>
</feature>
<feature type="binding site" evidence="1">
    <location>
        <position position="52"/>
    </location>
    <ligand>
        <name>substrate</name>
    </ligand>
</feature>
<feature type="binding site" evidence="1">
    <location>
        <begin position="80"/>
        <end position="82"/>
    </location>
    <ligand>
        <name>substrate</name>
    </ligand>
</feature>
<feature type="binding site" evidence="1">
    <location>
        <position position="84"/>
    </location>
    <ligand>
        <name>substrate</name>
    </ligand>
</feature>
<feature type="binding site" evidence="1">
    <location>
        <position position="86"/>
    </location>
    <ligand>
        <name>substrate</name>
    </ligand>
</feature>
<feature type="binding site" evidence="1">
    <location>
        <position position="208"/>
    </location>
    <ligand>
        <name>substrate</name>
    </ligand>
</feature>
<feature type="binding site" evidence="1">
    <location>
        <begin position="214"/>
        <end position="216"/>
    </location>
    <ligand>
        <name>substrate</name>
    </ligand>
</feature>
<reference key="1">
    <citation type="journal article" date="2002" name="J. Mol. Microbiol. Biotechnol.">
        <title>The genome of Methanosarcina mazei: evidence for lateral gene transfer between Bacteria and Archaea.</title>
        <authorList>
            <person name="Deppenmeier U."/>
            <person name="Johann A."/>
            <person name="Hartsch T."/>
            <person name="Merkl R."/>
            <person name="Schmitz R.A."/>
            <person name="Martinez-Arias R."/>
            <person name="Henne A."/>
            <person name="Wiezer A."/>
            <person name="Baeumer S."/>
            <person name="Jacobi C."/>
            <person name="Brueggemann H."/>
            <person name="Lienard T."/>
            <person name="Christmann A."/>
            <person name="Boemecke M."/>
            <person name="Steckel S."/>
            <person name="Bhattacharyya A."/>
            <person name="Lykidis A."/>
            <person name="Overbeek R."/>
            <person name="Klenk H.-P."/>
            <person name="Gunsalus R.P."/>
            <person name="Fritz H.-J."/>
            <person name="Gottschalk G."/>
        </authorList>
    </citation>
    <scope>NUCLEOTIDE SEQUENCE [LARGE SCALE GENOMIC DNA]</scope>
    <source>
        <strain>ATCC BAA-159 / DSM 3647 / Goe1 / Go1 / JCM 11833 / OCM 88</strain>
    </source>
</reference>
<name>UPPS_METMA</name>
<proteinExistence type="inferred from homology"/>
<accession>Q8PZ76</accession>
<sequence>MKNRTFSVFYRKYEQILEKEILSSEIPEHIAVIMDGNRRYAGQLGKARIFGHAMGAEVTEQVIEWCYEIGVKQLTLYAFSTENFQRSEEEVGGLFNLINEKFLKLHTDKRTYEKEMQVRVIGDRTKLPAYLNESIDRIEKATEHHRKFSLNVAIAYGGRQDIMQAVRDIATCVSSGKLSLEDVNESLISKHLYPAPGVPVPNVDLIIRTGGDERISNFLPWQANGSECATYFCAPFWPEFRKIDLLRSVRVYQARKEEKKREHSYRISKVKNFLRVGKYENKSEDLGQLLPLKKQGVS</sequence>
<dbReference type="EC" id="2.5.1.89" evidence="1"/>
<dbReference type="EMBL" id="AE008384">
    <property type="protein sequence ID" value="AAM30314.1"/>
    <property type="molecule type" value="Genomic_DNA"/>
</dbReference>
<dbReference type="SMR" id="Q8PZ76"/>
<dbReference type="KEGG" id="mma:MM_0618"/>
<dbReference type="PATRIC" id="fig|192952.21.peg.728"/>
<dbReference type="eggNOG" id="arCOG01532">
    <property type="taxonomic scope" value="Archaea"/>
</dbReference>
<dbReference type="HOGENOM" id="CLU_038505_0_6_2"/>
<dbReference type="BioCyc" id="MetaCyc:MONOMER-21252"/>
<dbReference type="Proteomes" id="UP000000595">
    <property type="component" value="Chromosome"/>
</dbReference>
<dbReference type="GO" id="GO:0045547">
    <property type="term" value="F:ditrans,polycis-polyprenyl diphosphate synthase [(2E,6E)-farnesyl diphosphate specific] activity"/>
    <property type="evidence" value="ECO:0007669"/>
    <property type="project" value="TreeGrafter"/>
</dbReference>
<dbReference type="GO" id="GO:0000287">
    <property type="term" value="F:magnesium ion binding"/>
    <property type="evidence" value="ECO:0007669"/>
    <property type="project" value="UniProtKB-UniRule"/>
</dbReference>
<dbReference type="GO" id="GO:0016094">
    <property type="term" value="P:polyprenol biosynthetic process"/>
    <property type="evidence" value="ECO:0007669"/>
    <property type="project" value="TreeGrafter"/>
</dbReference>
<dbReference type="CDD" id="cd00475">
    <property type="entry name" value="Cis_IPPS"/>
    <property type="match status" value="1"/>
</dbReference>
<dbReference type="FunFam" id="3.40.1180.10:FF:000003">
    <property type="entry name" value="Isoprenyl transferase 2"/>
    <property type="match status" value="1"/>
</dbReference>
<dbReference type="Gene3D" id="3.40.1180.10">
    <property type="entry name" value="Decaprenyl diphosphate synthase-like"/>
    <property type="match status" value="1"/>
</dbReference>
<dbReference type="HAMAP" id="MF_01139">
    <property type="entry name" value="ISPT"/>
    <property type="match status" value="1"/>
</dbReference>
<dbReference type="InterPro" id="IPR001441">
    <property type="entry name" value="UPP_synth-like"/>
</dbReference>
<dbReference type="InterPro" id="IPR018520">
    <property type="entry name" value="UPP_synth-like_CS"/>
</dbReference>
<dbReference type="InterPro" id="IPR036424">
    <property type="entry name" value="UPP_synth-like_sf"/>
</dbReference>
<dbReference type="NCBIfam" id="TIGR00055">
    <property type="entry name" value="uppS"/>
    <property type="match status" value="1"/>
</dbReference>
<dbReference type="PANTHER" id="PTHR10291:SF43">
    <property type="entry name" value="DEHYDRODOLICHYL DIPHOSPHATE SYNTHASE COMPLEX SUBUNIT DHDDS"/>
    <property type="match status" value="1"/>
</dbReference>
<dbReference type="PANTHER" id="PTHR10291">
    <property type="entry name" value="DEHYDRODOLICHYL DIPHOSPHATE SYNTHASE FAMILY MEMBER"/>
    <property type="match status" value="1"/>
</dbReference>
<dbReference type="Pfam" id="PF01255">
    <property type="entry name" value="Prenyltransf"/>
    <property type="match status" value="1"/>
</dbReference>
<dbReference type="SUPFAM" id="SSF64005">
    <property type="entry name" value="Undecaprenyl diphosphate synthase"/>
    <property type="match status" value="1"/>
</dbReference>
<dbReference type="PROSITE" id="PS01066">
    <property type="entry name" value="UPP_SYNTHASE"/>
    <property type="match status" value="1"/>
</dbReference>
<organism>
    <name type="scientific">Methanosarcina mazei (strain ATCC BAA-159 / DSM 3647 / Goe1 / Go1 / JCM 11833 / OCM 88)</name>
    <name type="common">Methanosarcina frisia</name>
    <dbReference type="NCBI Taxonomy" id="192952"/>
    <lineage>
        <taxon>Archaea</taxon>
        <taxon>Methanobacteriati</taxon>
        <taxon>Methanobacteriota</taxon>
        <taxon>Stenosarchaea group</taxon>
        <taxon>Methanomicrobia</taxon>
        <taxon>Methanosarcinales</taxon>
        <taxon>Methanosarcinaceae</taxon>
        <taxon>Methanosarcina</taxon>
    </lineage>
</organism>
<gene>
    <name evidence="1" type="primary">uppS</name>
    <name type="ordered locus">MM_0618</name>
</gene>